<organism>
    <name type="scientific">Desulfitobacterium hafniense (strain Y51)</name>
    <dbReference type="NCBI Taxonomy" id="138119"/>
    <lineage>
        <taxon>Bacteria</taxon>
        <taxon>Bacillati</taxon>
        <taxon>Bacillota</taxon>
        <taxon>Clostridia</taxon>
        <taxon>Eubacteriales</taxon>
        <taxon>Desulfitobacteriaceae</taxon>
        <taxon>Desulfitobacterium</taxon>
    </lineage>
</organism>
<proteinExistence type="inferred from homology"/>
<gene>
    <name evidence="1" type="primary">fluC1</name>
    <name evidence="1" type="synonym">crcB1</name>
    <name type="ordered locus">DSY2097</name>
</gene>
<comment type="function">
    <text evidence="1">Fluoride-specific ion channel. Important for reducing fluoride concentration in the cell, thus reducing its toxicity.</text>
</comment>
<comment type="catalytic activity">
    <reaction evidence="1">
        <text>fluoride(in) = fluoride(out)</text>
        <dbReference type="Rhea" id="RHEA:76159"/>
        <dbReference type="ChEBI" id="CHEBI:17051"/>
    </reaction>
    <physiologicalReaction direction="left-to-right" evidence="1">
        <dbReference type="Rhea" id="RHEA:76160"/>
    </physiologicalReaction>
</comment>
<comment type="activity regulation">
    <text evidence="1">Na(+) is not transported, but it plays an essential structural role and its presence is essential for fluoride channel function.</text>
</comment>
<comment type="subcellular location">
    <subcellularLocation>
        <location evidence="1">Cell membrane</location>
        <topology evidence="1">Multi-pass membrane protein</topology>
    </subcellularLocation>
</comment>
<comment type="similarity">
    <text evidence="1">Belongs to the fluoride channel Fluc/FEX (TC 1.A.43) family.</text>
</comment>
<protein>
    <recommendedName>
        <fullName evidence="1">Fluoride-specific ion channel FluC 1</fullName>
    </recommendedName>
</protein>
<reference key="1">
    <citation type="journal article" date="2006" name="J. Bacteriol.">
        <title>Complete genome sequence of the dehalorespiring bacterium Desulfitobacterium hafniense Y51 and comparison with Dehalococcoides ethenogenes 195.</title>
        <authorList>
            <person name="Nonaka H."/>
            <person name="Keresztes G."/>
            <person name="Shinoda Y."/>
            <person name="Ikenaga Y."/>
            <person name="Abe M."/>
            <person name="Naito K."/>
            <person name="Inatomi K."/>
            <person name="Furukawa K."/>
            <person name="Inui M."/>
            <person name="Yukawa H."/>
        </authorList>
    </citation>
    <scope>NUCLEOTIDE SEQUENCE [LARGE SCALE GENOMIC DNA]</scope>
    <source>
        <strain>Y51</strain>
    </source>
</reference>
<keyword id="KW-1003">Cell membrane</keyword>
<keyword id="KW-0407">Ion channel</keyword>
<keyword id="KW-0406">Ion transport</keyword>
<keyword id="KW-0472">Membrane</keyword>
<keyword id="KW-0479">Metal-binding</keyword>
<keyword id="KW-1185">Reference proteome</keyword>
<keyword id="KW-0915">Sodium</keyword>
<keyword id="KW-0812">Transmembrane</keyword>
<keyword id="KW-1133">Transmembrane helix</keyword>
<keyword id="KW-0813">Transport</keyword>
<dbReference type="EMBL" id="AP008230">
    <property type="protein sequence ID" value="BAE83886.1"/>
    <property type="molecule type" value="Genomic_DNA"/>
</dbReference>
<dbReference type="SMR" id="Q24VQ6"/>
<dbReference type="KEGG" id="dsy:DSY2097"/>
<dbReference type="eggNOG" id="COG0239">
    <property type="taxonomic scope" value="Bacteria"/>
</dbReference>
<dbReference type="HOGENOM" id="CLU_114342_1_2_9"/>
<dbReference type="Proteomes" id="UP000001946">
    <property type="component" value="Chromosome"/>
</dbReference>
<dbReference type="GO" id="GO:0005886">
    <property type="term" value="C:plasma membrane"/>
    <property type="evidence" value="ECO:0007669"/>
    <property type="project" value="UniProtKB-SubCell"/>
</dbReference>
<dbReference type="GO" id="GO:0062054">
    <property type="term" value="F:fluoride channel activity"/>
    <property type="evidence" value="ECO:0007669"/>
    <property type="project" value="UniProtKB-UniRule"/>
</dbReference>
<dbReference type="GO" id="GO:0046872">
    <property type="term" value="F:metal ion binding"/>
    <property type="evidence" value="ECO:0007669"/>
    <property type="project" value="UniProtKB-KW"/>
</dbReference>
<dbReference type="GO" id="GO:0140114">
    <property type="term" value="P:cellular detoxification of fluoride"/>
    <property type="evidence" value="ECO:0007669"/>
    <property type="project" value="UniProtKB-UniRule"/>
</dbReference>
<dbReference type="HAMAP" id="MF_00454">
    <property type="entry name" value="FluC"/>
    <property type="match status" value="1"/>
</dbReference>
<dbReference type="InterPro" id="IPR003691">
    <property type="entry name" value="FluC"/>
</dbReference>
<dbReference type="NCBIfam" id="TIGR00494">
    <property type="entry name" value="crcB"/>
    <property type="match status" value="1"/>
</dbReference>
<dbReference type="PANTHER" id="PTHR28259">
    <property type="entry name" value="FLUORIDE EXPORT PROTEIN 1-RELATED"/>
    <property type="match status" value="1"/>
</dbReference>
<dbReference type="PANTHER" id="PTHR28259:SF1">
    <property type="entry name" value="FLUORIDE EXPORT PROTEIN 1-RELATED"/>
    <property type="match status" value="1"/>
</dbReference>
<dbReference type="Pfam" id="PF02537">
    <property type="entry name" value="CRCB"/>
    <property type="match status" value="1"/>
</dbReference>
<feature type="chain" id="PRO_0000252877" description="Fluoride-specific ion channel FluC 1">
    <location>
        <begin position="1"/>
        <end position="114"/>
    </location>
</feature>
<feature type="transmembrane region" description="Helical" evidence="1">
    <location>
        <begin position="23"/>
        <end position="43"/>
    </location>
</feature>
<feature type="transmembrane region" description="Helical" evidence="1">
    <location>
        <begin position="52"/>
        <end position="72"/>
    </location>
</feature>
<feature type="transmembrane region" description="Helical" evidence="1">
    <location>
        <begin position="84"/>
        <end position="104"/>
    </location>
</feature>
<feature type="binding site" evidence="1">
    <location>
        <position position="62"/>
    </location>
    <ligand>
        <name>Na(+)</name>
        <dbReference type="ChEBI" id="CHEBI:29101"/>
        <note>structural</note>
    </ligand>
</feature>
<feature type="binding site" evidence="1">
    <location>
        <position position="65"/>
    </location>
    <ligand>
        <name>Na(+)</name>
        <dbReference type="ChEBI" id="CHEBI:29101"/>
        <note>structural</note>
    </ligand>
</feature>
<accession>Q24VQ6</accession>
<evidence type="ECO:0000255" key="1">
    <source>
        <dbReference type="HAMAP-Rule" id="MF_00454"/>
    </source>
</evidence>
<sequence length="114" mass="12581">MFGAMLRYLIGISFFADSRFPWATLTINLLGSFLLAWLTSYVFKKVRLSPHLSTAIGTGFVGSFTTFSTLSVETISLFQDGHNFLAMVYVLVSLLGGLTMSHLGFKVSKEVQKS</sequence>
<name>FLUC1_DESHY</name>